<proteinExistence type="evidence at protein level"/>
<sequence>MESEQLFHRGYYRNSYNSITSASSDEELLDGAGVIMDFQTSEDDNLLDGDTAVGTHYTMTNGGSINSSTHLLDLLDEPIPGVGTYDDFHTIDWVREKCKDRERHRRINSKKKESAWEMTKSLYDAWSGWLVVTLTGLASGALAGLIDIAADWMTDLKEGICLSALWYNHEQCCWGSNETTFEERDKCPQWKTWAELIIGQAEGPGSYIMNYIMYIFWALSFAFLAVSLVKVFAPYACGSGIPEIKTILSGFIIRGYLGKWTLMIKTITLVLAVASGLSLGKEGPLVHVACCCGNIFSYLFPKYSTNEAKKREVLSAASAAGVSVAFGAPIGGVLFSLEEVSYYFPLKTLWRSFFAALVAAFVLRSINPFGNSRLVLFYVEYHTPWYLFELFPFILLGVFGGLWGAFFIRANIAWCRRRKSTKFGKYPVLEVIIVAAITAVIAFPNPYTRLNTSELIKELFTDCGPLESSSLCDYRNDMNASKIVDDIPDRPAGIGVYSAIWQLCLALIFKIIMTVFTFGIKVPSGLFIPSMAIGAIAGRIVGIAVEQLAYYHHDWFIFKEWCEVGADCITPGLYAMVGAAACLGGVTRMTVSLVVIVFELTGGLEYIVPLMAAVMTSKWVGDAFGREGIYEAHIRLNGYPFLDAKEEFTHTTLAADVMRPRRNDPPLAVLTQDNMTVDDIENMINETSYNGFPVIMSKESQRLVGFALRRDLTIAIESARKKQEGIVGSSRVCFAQHTPSLPAESPRPLKLRSILDMSPFTVTDHTPMEIVVDIFRKLGLRQCLVTHNGRLLGIITKKDILRHMAQTANQDPASIMFN</sequence>
<evidence type="ECO:0000250" key="1"/>
<evidence type="ECO:0000250" key="2">
    <source>
        <dbReference type="UniProtKB" id="P35523"/>
    </source>
</evidence>
<evidence type="ECO:0000250" key="3">
    <source>
        <dbReference type="UniProtKB" id="P51791"/>
    </source>
</evidence>
<evidence type="ECO:0000250" key="4">
    <source>
        <dbReference type="UniProtKB" id="P51792"/>
    </source>
</evidence>
<evidence type="ECO:0000255" key="5"/>
<evidence type="ECO:0000255" key="6">
    <source>
        <dbReference type="PROSITE-ProRule" id="PRU00703"/>
    </source>
</evidence>
<evidence type="ECO:0000269" key="7">
    <source>
    </source>
</evidence>
<evidence type="ECO:0000269" key="8">
    <source>
    </source>
</evidence>
<evidence type="ECO:0000269" key="9">
    <source>
    </source>
</evidence>
<evidence type="ECO:0000269" key="10">
    <source>
    </source>
</evidence>
<evidence type="ECO:0000269" key="11">
    <source>
    </source>
</evidence>
<evidence type="ECO:0000303" key="12">
    <source>
    </source>
</evidence>
<evidence type="ECO:0000303" key="13">
    <source>
    </source>
</evidence>
<evidence type="ECO:0000303" key="14">
    <source>
    </source>
</evidence>
<evidence type="ECO:0000303" key="15">
    <source>
    </source>
</evidence>
<evidence type="ECO:0000305" key="16"/>
<accession>P51790</accession>
<accession>B7Z932</accession>
<accession>B9EGJ9</accession>
<accession>D3DP34</accession>
<accession>E9PB97</accession>
<accession>O14918</accession>
<accession>Q86Z21</accession>
<keyword id="KW-0025">Alternative splicing</keyword>
<keyword id="KW-0050">Antiport</keyword>
<keyword id="KW-0067">ATP-binding</keyword>
<keyword id="KW-0129">CBS domain</keyword>
<keyword id="KW-1003">Cell membrane</keyword>
<keyword id="KW-0966">Cell projection</keyword>
<keyword id="KW-0868">Chloride</keyword>
<keyword id="KW-0225">Disease variant</keyword>
<keyword id="KW-0967">Endosome</keyword>
<keyword id="KW-0887">Epilepsy</keyword>
<keyword id="KW-0325">Glycoprotein</keyword>
<keyword id="KW-0333">Golgi apparatus</keyword>
<keyword id="KW-0991">Intellectual disability</keyword>
<keyword id="KW-0406">Ion transport</keyword>
<keyword id="KW-0458">Lysosome</keyword>
<keyword id="KW-0472">Membrane</keyword>
<keyword id="KW-0547">Nucleotide-binding</keyword>
<keyword id="KW-1267">Proteomics identification</keyword>
<keyword id="KW-1185">Reference proteome</keyword>
<keyword id="KW-0677">Repeat</keyword>
<keyword id="KW-0812">Transmembrane</keyword>
<keyword id="KW-1133">Transmembrane helix</keyword>
<keyword id="KW-0813">Transport</keyword>
<dbReference type="EMBL" id="X78520">
    <property type="protein sequence ID" value="CAA55280.1"/>
    <property type="molecule type" value="mRNA"/>
</dbReference>
<dbReference type="EMBL" id="X78520">
    <property type="protein sequence ID" value="CAA55281.1"/>
    <property type="status" value="ALT_INIT"/>
    <property type="molecule type" value="mRNA"/>
</dbReference>
<dbReference type="EMBL" id="AF029346">
    <property type="protein sequence ID" value="AAB95161.1"/>
    <property type="molecule type" value="mRNA"/>
</dbReference>
<dbReference type="EMBL" id="AF172729">
    <property type="protein sequence ID" value="AAD51034.1"/>
    <property type="molecule type" value="mRNA"/>
</dbReference>
<dbReference type="EMBL" id="AB019542">
    <property type="protein sequence ID" value="BAC54560.1"/>
    <property type="status" value="ALT_INIT"/>
    <property type="molecule type" value="mRNA"/>
</dbReference>
<dbReference type="EMBL" id="AK304362">
    <property type="protein sequence ID" value="BAH14168.1"/>
    <property type="molecule type" value="mRNA"/>
</dbReference>
<dbReference type="EMBL" id="BX647119">
    <property type="status" value="NOT_ANNOTATED_CDS"/>
    <property type="molecule type" value="mRNA"/>
</dbReference>
<dbReference type="EMBL" id="AC084724">
    <property type="status" value="NOT_ANNOTATED_CDS"/>
    <property type="molecule type" value="Genomic_DNA"/>
</dbReference>
<dbReference type="EMBL" id="AC106878">
    <property type="status" value="NOT_ANNOTATED_CDS"/>
    <property type="molecule type" value="Genomic_DNA"/>
</dbReference>
<dbReference type="EMBL" id="CH471056">
    <property type="protein sequence ID" value="EAX04782.1"/>
    <property type="molecule type" value="Genomic_DNA"/>
</dbReference>
<dbReference type="EMBL" id="CH471056">
    <property type="protein sequence ID" value="EAX04786.1"/>
    <property type="molecule type" value="Genomic_DNA"/>
</dbReference>
<dbReference type="EMBL" id="BC136510">
    <property type="protein sequence ID" value="AAI36511.1"/>
    <property type="molecule type" value="mRNA"/>
</dbReference>
<dbReference type="CCDS" id="CCDS34100.1">
    <molecule id="P51790-2"/>
</dbReference>
<dbReference type="CCDS" id="CCDS34101.1">
    <molecule id="P51790-1"/>
</dbReference>
<dbReference type="CCDS" id="CCDS58932.1">
    <molecule id="P51790-4"/>
</dbReference>
<dbReference type="PIR" id="I37240">
    <property type="entry name" value="I37240"/>
</dbReference>
<dbReference type="RefSeq" id="NP_001230301.1">
    <molecule id="P51790-4"/>
    <property type="nucleotide sequence ID" value="NM_001243372.2"/>
</dbReference>
<dbReference type="RefSeq" id="NP_001230303.1">
    <property type="nucleotide sequence ID" value="NM_001243374.1"/>
</dbReference>
<dbReference type="RefSeq" id="NP_001820.2">
    <molecule id="P51790-1"/>
    <property type="nucleotide sequence ID" value="NM_001829.4"/>
</dbReference>
<dbReference type="RefSeq" id="NP_776297.2">
    <molecule id="P51790-2"/>
    <property type="nucleotide sequence ID" value="NM_173872.4"/>
</dbReference>
<dbReference type="RefSeq" id="XP_054204850.1">
    <molecule id="P51790-2"/>
    <property type="nucleotide sequence ID" value="XM_054348875.1"/>
</dbReference>
<dbReference type="RefSeq" id="XP_054204853.1">
    <molecule id="P51790-1"/>
    <property type="nucleotide sequence ID" value="XM_054348878.1"/>
</dbReference>
<dbReference type="SMR" id="P51790"/>
<dbReference type="BioGRID" id="107596">
    <property type="interactions" value="75"/>
</dbReference>
<dbReference type="FunCoup" id="P51790">
    <property type="interactions" value="2429"/>
</dbReference>
<dbReference type="IntAct" id="P51790">
    <property type="interactions" value="44"/>
</dbReference>
<dbReference type="STRING" id="9606.ENSP00000261514"/>
<dbReference type="ChEMBL" id="CHEMBL2401603"/>
<dbReference type="GuidetoPHARMACOLOGY" id="702"/>
<dbReference type="GlyCosmos" id="P51790">
    <property type="glycosylation" value="3 sites, No reported glycans"/>
</dbReference>
<dbReference type="GlyGen" id="P51790">
    <property type="glycosylation" value="4 sites"/>
</dbReference>
<dbReference type="iPTMnet" id="P51790"/>
<dbReference type="PhosphoSitePlus" id="P51790"/>
<dbReference type="SwissPalm" id="P51790"/>
<dbReference type="BioMuta" id="CLCN3"/>
<dbReference type="DMDM" id="226693513"/>
<dbReference type="jPOST" id="P51790"/>
<dbReference type="MassIVE" id="P51790"/>
<dbReference type="PaxDb" id="9606-ENSP00000261514"/>
<dbReference type="PeptideAtlas" id="P51790"/>
<dbReference type="ProteomicsDB" id="56388">
    <molecule id="P51790-1"/>
</dbReference>
<dbReference type="ProteomicsDB" id="56389">
    <molecule id="P51790-2"/>
</dbReference>
<dbReference type="ProteomicsDB" id="7526"/>
<dbReference type="Pumba" id="P51790"/>
<dbReference type="ABCD" id="P51790">
    <property type="antibodies" value="1 sequenced antibody"/>
</dbReference>
<dbReference type="Antibodypedia" id="28481">
    <property type="antibodies" value="247 antibodies from 22 providers"/>
</dbReference>
<dbReference type="DNASU" id="1182"/>
<dbReference type="Ensembl" id="ENST00000347613.9">
    <molecule id="P51790-2"/>
    <property type="protein sequence ID" value="ENSP00000261514.5"/>
    <property type="gene ID" value="ENSG00000109572.16"/>
</dbReference>
<dbReference type="Ensembl" id="ENST00000360642.7">
    <molecule id="P51790-4"/>
    <property type="protein sequence ID" value="ENSP00000353857.3"/>
    <property type="gene ID" value="ENSG00000109572.16"/>
</dbReference>
<dbReference type="Ensembl" id="ENST00000513761.6">
    <molecule id="P51790-1"/>
    <property type="protein sequence ID" value="ENSP00000424603.1"/>
    <property type="gene ID" value="ENSG00000109572.16"/>
</dbReference>
<dbReference type="GeneID" id="1182"/>
<dbReference type="KEGG" id="hsa:1182"/>
<dbReference type="MANE-Select" id="ENST00000513761.6">
    <property type="protein sequence ID" value="ENSP00000424603.1"/>
    <property type="RefSeq nucleotide sequence ID" value="NM_001829.4"/>
    <property type="RefSeq protein sequence ID" value="NP_001820.2"/>
</dbReference>
<dbReference type="UCSC" id="uc003ish.4">
    <molecule id="P51790-1"/>
    <property type="organism name" value="human"/>
</dbReference>
<dbReference type="AGR" id="HGNC:2021"/>
<dbReference type="CTD" id="1182"/>
<dbReference type="DisGeNET" id="1182"/>
<dbReference type="GeneCards" id="CLCN3"/>
<dbReference type="HGNC" id="HGNC:2021">
    <property type="gene designation" value="CLCN3"/>
</dbReference>
<dbReference type="HPA" id="ENSG00000109572">
    <property type="expression patterns" value="Low tissue specificity"/>
</dbReference>
<dbReference type="MalaCards" id="CLCN3"/>
<dbReference type="MIM" id="600580">
    <property type="type" value="gene"/>
</dbReference>
<dbReference type="MIM" id="619512">
    <property type="type" value="phenotype"/>
</dbReference>
<dbReference type="MIM" id="619517">
    <property type="type" value="phenotype"/>
</dbReference>
<dbReference type="neXtProt" id="NX_P51790"/>
<dbReference type="OpenTargets" id="ENSG00000109572"/>
<dbReference type="Orphanet" id="528084">
    <property type="disease" value="Non-specific syndromic intellectual disability"/>
</dbReference>
<dbReference type="PharmGKB" id="PA26548"/>
<dbReference type="VEuPathDB" id="HostDB:ENSG00000109572"/>
<dbReference type="eggNOG" id="KOG0475">
    <property type="taxonomic scope" value="Eukaryota"/>
</dbReference>
<dbReference type="GeneTree" id="ENSGT00940000153763"/>
<dbReference type="HOGENOM" id="CLU_003181_2_1_1"/>
<dbReference type="InParanoid" id="P51790"/>
<dbReference type="OMA" id="MFLKINM"/>
<dbReference type="OrthoDB" id="44789at2759"/>
<dbReference type="PAN-GO" id="P51790">
    <property type="GO annotations" value="6 GO annotations based on evolutionary models"/>
</dbReference>
<dbReference type="PhylomeDB" id="P51790"/>
<dbReference type="TreeFam" id="TF313867"/>
<dbReference type="PathwayCommons" id="P51790"/>
<dbReference type="Reactome" id="R-HSA-2672351">
    <property type="pathway name" value="Stimuli-sensing channels"/>
</dbReference>
<dbReference type="SignaLink" id="P51790"/>
<dbReference type="SIGNOR" id="P51790"/>
<dbReference type="BioGRID-ORCS" id="1182">
    <property type="hits" value="13 hits in 1157 CRISPR screens"/>
</dbReference>
<dbReference type="ChiTaRS" id="CLCN3">
    <property type="organism name" value="human"/>
</dbReference>
<dbReference type="GeneWiki" id="CLCN3"/>
<dbReference type="GenomeRNAi" id="1182"/>
<dbReference type="Pharos" id="P51790">
    <property type="development level" value="Tchem"/>
</dbReference>
<dbReference type="PRO" id="PR:P51790"/>
<dbReference type="Proteomes" id="UP000005640">
    <property type="component" value="Chromosome 4"/>
</dbReference>
<dbReference type="RNAct" id="P51790">
    <property type="molecule type" value="protein"/>
</dbReference>
<dbReference type="Bgee" id="ENSG00000109572">
    <property type="expression patterns" value="Expressed in mucosa of sigmoid colon and 209 other cell types or tissues"/>
</dbReference>
<dbReference type="ExpressionAtlas" id="P51790">
    <property type="expression patterns" value="baseline and differential"/>
</dbReference>
<dbReference type="GO" id="GO:0043679">
    <property type="term" value="C:axon terminus"/>
    <property type="evidence" value="ECO:0007669"/>
    <property type="project" value="Ensembl"/>
</dbReference>
<dbReference type="GO" id="GO:0009986">
    <property type="term" value="C:cell surface"/>
    <property type="evidence" value="ECO:0000303"/>
    <property type="project" value="UniProtKB"/>
</dbReference>
<dbReference type="GO" id="GO:0031410">
    <property type="term" value="C:cytoplasmic vesicle"/>
    <property type="evidence" value="ECO:0000314"/>
    <property type="project" value="GO_Central"/>
</dbReference>
<dbReference type="GO" id="GO:0005769">
    <property type="term" value="C:early endosome"/>
    <property type="evidence" value="ECO:0000314"/>
    <property type="project" value="UniProtKB"/>
</dbReference>
<dbReference type="GO" id="GO:0031901">
    <property type="term" value="C:early endosome membrane"/>
    <property type="evidence" value="ECO:0007669"/>
    <property type="project" value="UniProtKB-SubCell"/>
</dbReference>
<dbReference type="GO" id="GO:0010008">
    <property type="term" value="C:endosome membrane"/>
    <property type="evidence" value="ECO:0000250"/>
    <property type="project" value="UniProtKB"/>
</dbReference>
<dbReference type="GO" id="GO:0009897">
    <property type="term" value="C:external side of plasma membrane"/>
    <property type="evidence" value="ECO:0000314"/>
    <property type="project" value="GO_Central"/>
</dbReference>
<dbReference type="GO" id="GO:0098982">
    <property type="term" value="C:GABA-ergic synapse"/>
    <property type="evidence" value="ECO:0000314"/>
    <property type="project" value="SynGO"/>
</dbReference>
<dbReference type="GO" id="GO:0098978">
    <property type="term" value="C:glutamatergic synapse"/>
    <property type="evidence" value="ECO:0000314"/>
    <property type="project" value="SynGO"/>
</dbReference>
<dbReference type="GO" id="GO:0005794">
    <property type="term" value="C:Golgi apparatus"/>
    <property type="evidence" value="ECO:0000314"/>
    <property type="project" value="UniProtKB"/>
</dbReference>
<dbReference type="GO" id="GO:0000139">
    <property type="term" value="C:Golgi membrane"/>
    <property type="evidence" value="ECO:0007669"/>
    <property type="project" value="UniProtKB-SubCell"/>
</dbReference>
<dbReference type="GO" id="GO:0043231">
    <property type="term" value="C:intracellular membrane-bounded organelle"/>
    <property type="evidence" value="ECO:0000314"/>
    <property type="project" value="HPA"/>
</dbReference>
<dbReference type="GO" id="GO:0005770">
    <property type="term" value="C:late endosome"/>
    <property type="evidence" value="ECO:0000314"/>
    <property type="project" value="UniProtKB"/>
</dbReference>
<dbReference type="GO" id="GO:0031902">
    <property type="term" value="C:late endosome membrane"/>
    <property type="evidence" value="ECO:0007669"/>
    <property type="project" value="UniProtKB-SubCell"/>
</dbReference>
<dbReference type="GO" id="GO:0005765">
    <property type="term" value="C:lysosomal membrane"/>
    <property type="evidence" value="ECO:0000250"/>
    <property type="project" value="UniProtKB"/>
</dbReference>
<dbReference type="GO" id="GO:0016020">
    <property type="term" value="C:membrane"/>
    <property type="evidence" value="ECO:0007005"/>
    <property type="project" value="UniProtKB"/>
</dbReference>
<dbReference type="GO" id="GO:0045335">
    <property type="term" value="C:phagocytic vesicle"/>
    <property type="evidence" value="ECO:0000314"/>
    <property type="project" value="GO_Central"/>
</dbReference>
<dbReference type="GO" id="GO:0005886">
    <property type="term" value="C:plasma membrane"/>
    <property type="evidence" value="ECO:0000314"/>
    <property type="project" value="GO_Central"/>
</dbReference>
<dbReference type="GO" id="GO:0055037">
    <property type="term" value="C:recycling endosome"/>
    <property type="evidence" value="ECO:0000250"/>
    <property type="project" value="UniProtKB"/>
</dbReference>
<dbReference type="GO" id="GO:0032587">
    <property type="term" value="C:ruffle membrane"/>
    <property type="evidence" value="ECO:0007669"/>
    <property type="project" value="UniProtKB-SubCell"/>
</dbReference>
<dbReference type="GO" id="GO:0030141">
    <property type="term" value="C:secretory granule"/>
    <property type="evidence" value="ECO:0000314"/>
    <property type="project" value="GO_Central"/>
</dbReference>
<dbReference type="GO" id="GO:0042581">
    <property type="term" value="C:specific granule"/>
    <property type="evidence" value="ECO:0000314"/>
    <property type="project" value="GO_Central"/>
</dbReference>
<dbReference type="GO" id="GO:0008021">
    <property type="term" value="C:synaptic vesicle"/>
    <property type="evidence" value="ECO:0000314"/>
    <property type="project" value="GO_Central"/>
</dbReference>
<dbReference type="GO" id="GO:0030672">
    <property type="term" value="C:synaptic vesicle membrane"/>
    <property type="evidence" value="ECO:0000314"/>
    <property type="project" value="SynGO"/>
</dbReference>
<dbReference type="GO" id="GO:0012506">
    <property type="term" value="C:vesicle membrane"/>
    <property type="evidence" value="ECO:0000314"/>
    <property type="project" value="UniProtKB"/>
</dbReference>
<dbReference type="GO" id="GO:0015297">
    <property type="term" value="F:antiporter activity"/>
    <property type="evidence" value="ECO:0000250"/>
    <property type="project" value="UniProtKB"/>
</dbReference>
<dbReference type="GO" id="GO:0005524">
    <property type="term" value="F:ATP binding"/>
    <property type="evidence" value="ECO:0007669"/>
    <property type="project" value="UniProtKB-KW"/>
</dbReference>
<dbReference type="GO" id="GO:0005254">
    <property type="term" value="F:chloride channel activity"/>
    <property type="evidence" value="ECO:0000314"/>
    <property type="project" value="GO_Central"/>
</dbReference>
<dbReference type="GO" id="GO:0062158">
    <property type="term" value="F:chloride:proton antiporter activity"/>
    <property type="evidence" value="ECO:0007669"/>
    <property type="project" value="InterPro"/>
</dbReference>
<dbReference type="GO" id="GO:0030165">
    <property type="term" value="F:PDZ domain binding"/>
    <property type="evidence" value="ECO:0000314"/>
    <property type="project" value="UniProtKB"/>
</dbReference>
<dbReference type="GO" id="GO:0005247">
    <property type="term" value="F:voltage-gated chloride channel activity"/>
    <property type="evidence" value="ECO:0000318"/>
    <property type="project" value="GO_Central"/>
</dbReference>
<dbReference type="GO" id="GO:0072320">
    <property type="term" value="F:volume-sensitive chloride channel activity"/>
    <property type="evidence" value="ECO:0000315"/>
    <property type="project" value="GO_Central"/>
</dbReference>
<dbReference type="GO" id="GO:0008344">
    <property type="term" value="P:adult locomotory behavior"/>
    <property type="evidence" value="ECO:0007669"/>
    <property type="project" value="Ensembl"/>
</dbReference>
<dbReference type="GO" id="GO:1902476">
    <property type="term" value="P:chloride transmembrane transport"/>
    <property type="evidence" value="ECO:0000314"/>
    <property type="project" value="GO_Central"/>
</dbReference>
<dbReference type="GO" id="GO:0048388">
    <property type="term" value="P:endosomal lumen acidification"/>
    <property type="evidence" value="ECO:0000304"/>
    <property type="project" value="UniProtKB"/>
</dbReference>
<dbReference type="GO" id="GO:0045794">
    <property type="term" value="P:negative regulation of cell volume"/>
    <property type="evidence" value="ECO:0000315"/>
    <property type="project" value="GO_Central"/>
</dbReference>
<dbReference type="GO" id="GO:0006911">
    <property type="term" value="P:phagocytosis, engulfment"/>
    <property type="evidence" value="ECO:0007669"/>
    <property type="project" value="Ensembl"/>
</dbReference>
<dbReference type="GO" id="GO:0045494">
    <property type="term" value="P:photoreceptor cell maintenance"/>
    <property type="evidence" value="ECO:0007669"/>
    <property type="project" value="Ensembl"/>
</dbReference>
<dbReference type="GO" id="GO:1903428">
    <property type="term" value="P:positive regulation of reactive oxygen species biosynthetic process"/>
    <property type="evidence" value="ECO:0007669"/>
    <property type="project" value="Ensembl"/>
</dbReference>
<dbReference type="GO" id="GO:0006885">
    <property type="term" value="P:regulation of pH"/>
    <property type="evidence" value="ECO:0000304"/>
    <property type="project" value="UniProtKB"/>
</dbReference>
<dbReference type="GO" id="GO:0051932">
    <property type="term" value="P:synaptic transmission, GABAergic"/>
    <property type="evidence" value="ECO:0007669"/>
    <property type="project" value="Ensembl"/>
</dbReference>
<dbReference type="GO" id="GO:0035249">
    <property type="term" value="P:synaptic transmission, glutamatergic"/>
    <property type="evidence" value="ECO:0007669"/>
    <property type="project" value="Ensembl"/>
</dbReference>
<dbReference type="GO" id="GO:0097401">
    <property type="term" value="P:synaptic vesicle lumen acidification"/>
    <property type="evidence" value="ECO:0007669"/>
    <property type="project" value="Ensembl"/>
</dbReference>
<dbReference type="CDD" id="cd04591">
    <property type="entry name" value="CBS_pair_voltage-gated_CLC_euk_bac"/>
    <property type="match status" value="1"/>
</dbReference>
<dbReference type="CDD" id="cd03684">
    <property type="entry name" value="ClC_3_like"/>
    <property type="match status" value="1"/>
</dbReference>
<dbReference type="FunFam" id="3.90.1280.20:FF:000001">
    <property type="entry name" value="Chloride channel protein"/>
    <property type="match status" value="1"/>
</dbReference>
<dbReference type="FunFam" id="3.90.1280.20:FF:000002">
    <property type="entry name" value="Chloride channel protein"/>
    <property type="match status" value="1"/>
</dbReference>
<dbReference type="Gene3D" id="3.90.1280.20">
    <property type="match status" value="2"/>
</dbReference>
<dbReference type="Gene3D" id="1.10.3080.10">
    <property type="entry name" value="Clc chloride channel"/>
    <property type="match status" value="1"/>
</dbReference>
<dbReference type="InterPro" id="IPR000644">
    <property type="entry name" value="CBS_dom"/>
</dbReference>
<dbReference type="InterPro" id="IPR046342">
    <property type="entry name" value="CBS_dom_sf"/>
</dbReference>
<dbReference type="InterPro" id="IPR014743">
    <property type="entry name" value="Cl-channel_core"/>
</dbReference>
<dbReference type="InterPro" id="IPR001807">
    <property type="entry name" value="ClC"/>
</dbReference>
<dbReference type="InterPro" id="IPR002245">
    <property type="entry name" value="ClC3"/>
</dbReference>
<dbReference type="PANTHER" id="PTHR45711">
    <property type="entry name" value="CHLORIDE CHANNEL PROTEIN"/>
    <property type="match status" value="1"/>
</dbReference>
<dbReference type="PANTHER" id="PTHR45711:SF8">
    <property type="entry name" value="H(+)_CL(-) EXCHANGE TRANSPORTER 3"/>
    <property type="match status" value="1"/>
</dbReference>
<dbReference type="Pfam" id="PF00571">
    <property type="entry name" value="CBS"/>
    <property type="match status" value="1"/>
</dbReference>
<dbReference type="Pfam" id="PF00654">
    <property type="entry name" value="Voltage_CLC"/>
    <property type="match status" value="1"/>
</dbReference>
<dbReference type="PRINTS" id="PR00762">
    <property type="entry name" value="CLCHANNEL"/>
</dbReference>
<dbReference type="PRINTS" id="PR01114">
    <property type="entry name" value="CLCHANNEL3"/>
</dbReference>
<dbReference type="SMART" id="SM00116">
    <property type="entry name" value="CBS"/>
    <property type="match status" value="2"/>
</dbReference>
<dbReference type="SUPFAM" id="SSF54631">
    <property type="entry name" value="CBS-domain pair"/>
    <property type="match status" value="1"/>
</dbReference>
<dbReference type="SUPFAM" id="SSF81340">
    <property type="entry name" value="Clc chloride channel"/>
    <property type="match status" value="1"/>
</dbReference>
<dbReference type="PROSITE" id="PS51371">
    <property type="entry name" value="CBS"/>
    <property type="match status" value="2"/>
</dbReference>
<gene>
    <name type="primary">CLCN3</name>
</gene>
<organism>
    <name type="scientific">Homo sapiens</name>
    <name type="common">Human</name>
    <dbReference type="NCBI Taxonomy" id="9606"/>
    <lineage>
        <taxon>Eukaryota</taxon>
        <taxon>Metazoa</taxon>
        <taxon>Chordata</taxon>
        <taxon>Craniata</taxon>
        <taxon>Vertebrata</taxon>
        <taxon>Euteleostomi</taxon>
        <taxon>Mammalia</taxon>
        <taxon>Eutheria</taxon>
        <taxon>Euarchontoglires</taxon>
        <taxon>Primates</taxon>
        <taxon>Haplorrhini</taxon>
        <taxon>Catarrhini</taxon>
        <taxon>Hominidae</taxon>
        <taxon>Homo</taxon>
    </lineage>
</organism>
<reference key="1">
    <citation type="journal article" date="1995" name="Genomics">
        <title>Characterization of a human and murine gene (CLCN3) sharing similarities to voltage-gated chloride channels and to a yeast integral membrane protein.</title>
        <authorList>
            <person name="Borsani G."/>
            <person name="Rugarli E.I."/>
            <person name="Taglialatela M."/>
            <person name="Wong C."/>
            <person name="Ballabio A."/>
        </authorList>
    </citation>
    <scope>NUCLEOTIDE SEQUENCE [MRNA] (ISOFORM 1)</scope>
    <source>
        <tissue>Retina</tissue>
    </source>
</reference>
<reference key="2">
    <citation type="journal article" date="1998" name="Curr. Eye Res.">
        <title>Ion transporters and receptors in cDNA libraries from lens and cornea epithelia.</title>
        <authorList>
            <person name="Shepard A.R."/>
            <person name="Rae J.L."/>
        </authorList>
    </citation>
    <scope>NUCLEOTIDE SEQUENCE [MRNA] (ISOFORM 1)</scope>
    <source>
        <tissue>Lens epithelium</tissue>
    </source>
</reference>
<reference key="3">
    <citation type="journal article" date="2001" name="J. Biol. Chem.">
        <title>Regulation of human CLC-3 channels by multifunctional Ca2+/calmodulin-dependent protein kinase.</title>
        <authorList>
            <person name="Huang P."/>
            <person name="Liu J."/>
            <person name="Di A."/>
            <person name="Robinson N.C."/>
            <person name="Musch M.W."/>
            <person name="Kaetzel M.A."/>
            <person name="Nelson D.J."/>
        </authorList>
    </citation>
    <scope>NUCLEOTIDE SEQUENCE [MRNA] (ISOFORM 1)</scope>
    <scope>FUNCTION</scope>
    <scope>GLYCOSYLATION</scope>
    <scope>SUBCELLULAR LOCATION</scope>
    <scope>MUTAGENESIS OF GLY-280</scope>
    <source>
        <tissue>Colon tumor</tissue>
    </source>
</reference>
<reference key="4">
    <citation type="journal article" date="2002" name="FASEB J.">
        <title>ClC-3B, a novel ClC-3 splicing variant that interacts with EBP50 and facilitates expression of CFTR-regulated ORCC.</title>
        <authorList>
            <person name="Ogura T."/>
            <person name="Furukawa T."/>
            <person name="Toyozaki T."/>
            <person name="Yamada K."/>
            <person name="Zheng Y.-J."/>
            <person name="Katayama Y."/>
            <person name="Nakaya H."/>
            <person name="Inagaki N."/>
        </authorList>
    </citation>
    <scope>NUCLEOTIDE SEQUENCE [MRNA] (ISOFORM 2)</scope>
    <scope>TISSUE SPECIFICITY</scope>
    <scope>INTERACTION WITH NHERF1 (ISOFORM 2)</scope>
    <scope>DOMAIN (ISOFORM 2)</scope>
    <scope>FUNCTION (ISOFORM 2)</scope>
    <scope>SUBCELLULAR LOCATION (ISOFORM 2)</scope>
</reference>
<reference key="5">
    <citation type="journal article" date="2007" name="BMC Genomics">
        <title>The full-ORF clone resource of the German cDNA consortium.</title>
        <authorList>
            <person name="Bechtel S."/>
            <person name="Rosenfelder H."/>
            <person name="Duda A."/>
            <person name="Schmidt C.P."/>
            <person name="Ernst U."/>
            <person name="Wellenreuther R."/>
            <person name="Mehrle A."/>
            <person name="Schuster C."/>
            <person name="Bahr A."/>
            <person name="Bloecker H."/>
            <person name="Heubner D."/>
            <person name="Hoerlein A."/>
            <person name="Michel G."/>
            <person name="Wedler H."/>
            <person name="Koehrer K."/>
            <person name="Ottenwaelder B."/>
            <person name="Poustka A."/>
            <person name="Wiemann S."/>
            <person name="Schupp I."/>
        </authorList>
    </citation>
    <scope>NUCLEOTIDE SEQUENCE [LARGE SCALE MRNA]</scope>
    <source>
        <tissue>Colon endothelium</tissue>
    </source>
</reference>
<reference key="6">
    <citation type="journal article" date="2004" name="Nat. Genet.">
        <title>Complete sequencing and characterization of 21,243 full-length human cDNAs.</title>
        <authorList>
            <person name="Ota T."/>
            <person name="Suzuki Y."/>
            <person name="Nishikawa T."/>
            <person name="Otsuki T."/>
            <person name="Sugiyama T."/>
            <person name="Irie R."/>
            <person name="Wakamatsu A."/>
            <person name="Hayashi K."/>
            <person name="Sato H."/>
            <person name="Nagai K."/>
            <person name="Kimura K."/>
            <person name="Makita H."/>
            <person name="Sekine M."/>
            <person name="Obayashi M."/>
            <person name="Nishi T."/>
            <person name="Shibahara T."/>
            <person name="Tanaka T."/>
            <person name="Ishii S."/>
            <person name="Yamamoto J."/>
            <person name="Saito K."/>
            <person name="Kawai Y."/>
            <person name="Isono Y."/>
            <person name="Nakamura Y."/>
            <person name="Nagahari K."/>
            <person name="Murakami K."/>
            <person name="Yasuda T."/>
            <person name="Iwayanagi T."/>
            <person name="Wagatsuma M."/>
            <person name="Shiratori A."/>
            <person name="Sudo H."/>
            <person name="Hosoiri T."/>
            <person name="Kaku Y."/>
            <person name="Kodaira H."/>
            <person name="Kondo H."/>
            <person name="Sugawara M."/>
            <person name="Takahashi M."/>
            <person name="Kanda K."/>
            <person name="Yokoi T."/>
            <person name="Furuya T."/>
            <person name="Kikkawa E."/>
            <person name="Omura Y."/>
            <person name="Abe K."/>
            <person name="Kamihara K."/>
            <person name="Katsuta N."/>
            <person name="Sato K."/>
            <person name="Tanikawa M."/>
            <person name="Yamazaki M."/>
            <person name="Ninomiya K."/>
            <person name="Ishibashi T."/>
            <person name="Yamashita H."/>
            <person name="Murakawa K."/>
            <person name="Fujimori K."/>
            <person name="Tanai H."/>
            <person name="Kimata M."/>
            <person name="Watanabe M."/>
            <person name="Hiraoka S."/>
            <person name="Chiba Y."/>
            <person name="Ishida S."/>
            <person name="Ono Y."/>
            <person name="Takiguchi S."/>
            <person name="Watanabe S."/>
            <person name="Yosida M."/>
            <person name="Hotuta T."/>
            <person name="Kusano J."/>
            <person name="Kanehori K."/>
            <person name="Takahashi-Fujii A."/>
            <person name="Hara H."/>
            <person name="Tanase T.-O."/>
            <person name="Nomura Y."/>
            <person name="Togiya S."/>
            <person name="Komai F."/>
            <person name="Hara R."/>
            <person name="Takeuchi K."/>
            <person name="Arita M."/>
            <person name="Imose N."/>
            <person name="Musashino K."/>
            <person name="Yuuki H."/>
            <person name="Oshima A."/>
            <person name="Sasaki N."/>
            <person name="Aotsuka S."/>
            <person name="Yoshikawa Y."/>
            <person name="Matsunawa H."/>
            <person name="Ichihara T."/>
            <person name="Shiohata N."/>
            <person name="Sano S."/>
            <person name="Moriya S."/>
            <person name="Momiyama H."/>
            <person name="Satoh N."/>
            <person name="Takami S."/>
            <person name="Terashima Y."/>
            <person name="Suzuki O."/>
            <person name="Nakagawa S."/>
            <person name="Senoh A."/>
            <person name="Mizoguchi H."/>
            <person name="Goto Y."/>
            <person name="Shimizu F."/>
            <person name="Wakebe H."/>
            <person name="Hishigaki H."/>
            <person name="Watanabe T."/>
            <person name="Sugiyama A."/>
            <person name="Takemoto M."/>
            <person name="Kawakami B."/>
            <person name="Yamazaki M."/>
            <person name="Watanabe K."/>
            <person name="Kumagai A."/>
            <person name="Itakura S."/>
            <person name="Fukuzumi Y."/>
            <person name="Fujimori Y."/>
            <person name="Komiyama M."/>
            <person name="Tashiro H."/>
            <person name="Tanigami A."/>
            <person name="Fujiwara T."/>
            <person name="Ono T."/>
            <person name="Yamada K."/>
            <person name="Fujii Y."/>
            <person name="Ozaki K."/>
            <person name="Hirao M."/>
            <person name="Ohmori Y."/>
            <person name="Kawabata A."/>
            <person name="Hikiji T."/>
            <person name="Kobatake N."/>
            <person name="Inagaki H."/>
            <person name="Ikema Y."/>
            <person name="Okamoto S."/>
            <person name="Okitani R."/>
            <person name="Kawakami T."/>
            <person name="Noguchi S."/>
            <person name="Itoh T."/>
            <person name="Shigeta K."/>
            <person name="Senba T."/>
            <person name="Matsumura K."/>
            <person name="Nakajima Y."/>
            <person name="Mizuno T."/>
            <person name="Morinaga M."/>
            <person name="Sasaki M."/>
            <person name="Togashi T."/>
            <person name="Oyama M."/>
            <person name="Hata H."/>
            <person name="Watanabe M."/>
            <person name="Komatsu T."/>
            <person name="Mizushima-Sugano J."/>
            <person name="Satoh T."/>
            <person name="Shirai Y."/>
            <person name="Takahashi Y."/>
            <person name="Nakagawa K."/>
            <person name="Okumura K."/>
            <person name="Nagase T."/>
            <person name="Nomura N."/>
            <person name="Kikuchi H."/>
            <person name="Masuho Y."/>
            <person name="Yamashita R."/>
            <person name="Nakai K."/>
            <person name="Yada T."/>
            <person name="Nakamura Y."/>
            <person name="Ohara O."/>
            <person name="Isogai T."/>
            <person name="Sugano S."/>
        </authorList>
    </citation>
    <scope>NUCLEOTIDE SEQUENCE [LARGE SCALE MRNA] (ISOFORM 3)</scope>
    <source>
        <tissue>Trachea</tissue>
    </source>
</reference>
<reference key="7">
    <citation type="journal article" date="2005" name="Nature">
        <title>Generation and annotation of the DNA sequences of human chromosomes 2 and 4.</title>
        <authorList>
            <person name="Hillier L.W."/>
            <person name="Graves T.A."/>
            <person name="Fulton R.S."/>
            <person name="Fulton L.A."/>
            <person name="Pepin K.H."/>
            <person name="Minx P."/>
            <person name="Wagner-McPherson C."/>
            <person name="Layman D."/>
            <person name="Wylie K."/>
            <person name="Sekhon M."/>
            <person name="Becker M.C."/>
            <person name="Fewell G.A."/>
            <person name="Delehaunty K.D."/>
            <person name="Miner T.L."/>
            <person name="Nash W.E."/>
            <person name="Kremitzki C."/>
            <person name="Oddy L."/>
            <person name="Du H."/>
            <person name="Sun H."/>
            <person name="Bradshaw-Cordum H."/>
            <person name="Ali J."/>
            <person name="Carter J."/>
            <person name="Cordes M."/>
            <person name="Harris A."/>
            <person name="Isak A."/>
            <person name="van Brunt A."/>
            <person name="Nguyen C."/>
            <person name="Du F."/>
            <person name="Courtney L."/>
            <person name="Kalicki J."/>
            <person name="Ozersky P."/>
            <person name="Abbott S."/>
            <person name="Armstrong J."/>
            <person name="Belter E.A."/>
            <person name="Caruso L."/>
            <person name="Cedroni M."/>
            <person name="Cotton M."/>
            <person name="Davidson T."/>
            <person name="Desai A."/>
            <person name="Elliott G."/>
            <person name="Erb T."/>
            <person name="Fronick C."/>
            <person name="Gaige T."/>
            <person name="Haakenson W."/>
            <person name="Haglund K."/>
            <person name="Holmes A."/>
            <person name="Harkins R."/>
            <person name="Kim K."/>
            <person name="Kruchowski S.S."/>
            <person name="Strong C.M."/>
            <person name="Grewal N."/>
            <person name="Goyea E."/>
            <person name="Hou S."/>
            <person name="Levy A."/>
            <person name="Martinka S."/>
            <person name="Mead K."/>
            <person name="McLellan M.D."/>
            <person name="Meyer R."/>
            <person name="Randall-Maher J."/>
            <person name="Tomlinson C."/>
            <person name="Dauphin-Kohlberg S."/>
            <person name="Kozlowicz-Reilly A."/>
            <person name="Shah N."/>
            <person name="Swearengen-Shahid S."/>
            <person name="Snider J."/>
            <person name="Strong J.T."/>
            <person name="Thompson J."/>
            <person name="Yoakum M."/>
            <person name="Leonard S."/>
            <person name="Pearman C."/>
            <person name="Trani L."/>
            <person name="Radionenko M."/>
            <person name="Waligorski J.E."/>
            <person name="Wang C."/>
            <person name="Rock S.M."/>
            <person name="Tin-Wollam A.-M."/>
            <person name="Maupin R."/>
            <person name="Latreille P."/>
            <person name="Wendl M.C."/>
            <person name="Yang S.-P."/>
            <person name="Pohl C."/>
            <person name="Wallis J.W."/>
            <person name="Spieth J."/>
            <person name="Bieri T.A."/>
            <person name="Berkowicz N."/>
            <person name="Nelson J.O."/>
            <person name="Osborne J."/>
            <person name="Ding L."/>
            <person name="Meyer R."/>
            <person name="Sabo A."/>
            <person name="Shotland Y."/>
            <person name="Sinha P."/>
            <person name="Wohldmann P.E."/>
            <person name="Cook L.L."/>
            <person name="Hickenbotham M.T."/>
            <person name="Eldred J."/>
            <person name="Williams D."/>
            <person name="Jones T.A."/>
            <person name="She X."/>
            <person name="Ciccarelli F.D."/>
            <person name="Izaurralde E."/>
            <person name="Taylor J."/>
            <person name="Schmutz J."/>
            <person name="Myers R.M."/>
            <person name="Cox D.R."/>
            <person name="Huang X."/>
            <person name="McPherson J.D."/>
            <person name="Mardis E.R."/>
            <person name="Clifton S.W."/>
            <person name="Warren W.C."/>
            <person name="Chinwalla A.T."/>
            <person name="Eddy S.R."/>
            <person name="Marra M.A."/>
            <person name="Ovcharenko I."/>
            <person name="Furey T.S."/>
            <person name="Miller W."/>
            <person name="Eichler E.E."/>
            <person name="Bork P."/>
            <person name="Suyama M."/>
            <person name="Torrents D."/>
            <person name="Waterston R.H."/>
            <person name="Wilson R.K."/>
        </authorList>
    </citation>
    <scope>NUCLEOTIDE SEQUENCE [LARGE SCALE GENOMIC DNA]</scope>
</reference>
<reference key="8">
    <citation type="submission" date="2005-09" db="EMBL/GenBank/DDBJ databases">
        <authorList>
            <person name="Mural R.J."/>
            <person name="Istrail S."/>
            <person name="Sutton G.G."/>
            <person name="Florea L."/>
            <person name="Halpern A.L."/>
            <person name="Mobarry C.M."/>
            <person name="Lippert R."/>
            <person name="Walenz B."/>
            <person name="Shatkay H."/>
            <person name="Dew I."/>
            <person name="Miller J.R."/>
            <person name="Flanigan M.J."/>
            <person name="Edwards N.J."/>
            <person name="Bolanos R."/>
            <person name="Fasulo D."/>
            <person name="Halldorsson B.V."/>
            <person name="Hannenhalli S."/>
            <person name="Turner R."/>
            <person name="Yooseph S."/>
            <person name="Lu F."/>
            <person name="Nusskern D.R."/>
            <person name="Shue B.C."/>
            <person name="Zheng X.H."/>
            <person name="Zhong F."/>
            <person name="Delcher A.L."/>
            <person name="Huson D.H."/>
            <person name="Kravitz S.A."/>
            <person name="Mouchard L."/>
            <person name="Reinert K."/>
            <person name="Remington K.A."/>
            <person name="Clark A.G."/>
            <person name="Waterman M.S."/>
            <person name="Eichler E.E."/>
            <person name="Adams M.D."/>
            <person name="Hunkapiller M.W."/>
            <person name="Myers E.W."/>
            <person name="Venter J.C."/>
        </authorList>
    </citation>
    <scope>NUCLEOTIDE SEQUENCE [LARGE SCALE GENOMIC DNA]</scope>
</reference>
<reference key="9">
    <citation type="journal article" date="2004" name="Genome Res.">
        <title>The status, quality, and expansion of the NIH full-length cDNA project: the Mammalian Gene Collection (MGC).</title>
        <authorList>
            <consortium name="The MGC Project Team"/>
        </authorList>
    </citation>
    <scope>NUCLEOTIDE SEQUENCE [LARGE SCALE MRNA] (ISOFORM 4)</scope>
    <source>
        <tissue>Testis</tissue>
    </source>
</reference>
<reference key="10">
    <citation type="journal article" date="1999" name="J. Mol. Cell. Cardiol.">
        <title>Expression of CLCN voltage-gated chloride channel genes in human blood vessels.</title>
        <authorList>
            <person name="Lamb F.S."/>
            <person name="Clayton G.H."/>
            <person name="Liu B.-X."/>
            <person name="Smith R.L."/>
            <person name="Barna T.J."/>
            <person name="Schutte B.C."/>
        </authorList>
    </citation>
    <scope>TISSUE SPECIFICITY</scope>
    <source>
        <tissue>Aortic endothelium</tissue>
        <tissue>Fetal lung</tissue>
        <tissue>Vascular smooth muscle</tissue>
    </source>
</reference>
<reference key="11">
    <citation type="journal article" date="2003" name="J. Biol. Chem.">
        <title>The PDZ-binding chloride channel ClC-3B localizes to the Golgi and associates with cystic fibrosis transmembrane conductance regulator-interacting PDZ proteins.</title>
        <authorList>
            <person name="Gentzsch M."/>
            <person name="Cui L."/>
            <person name="Mengos A."/>
            <person name="Chang X.-B."/>
            <person name="Chen J.-H."/>
            <person name="Riordan J.R."/>
        </authorList>
    </citation>
    <scope>INTERACTION WITH GOPC; PDZK1 AND NHERF1 (ISOFORM 2)</scope>
    <scope>GLYCOSYLATION</scope>
    <scope>TISSUE SPECIFICITY</scope>
    <scope>SUBCELLULAR LOCATION (ISOFORMS 1 AND 2)</scope>
</reference>
<reference key="12">
    <citation type="journal article" date="2018" name="Physiol. Rev.">
        <title>CLC Chloride Channels and Transporters: Structure, Function, Physiology, and Disease.</title>
        <authorList>
            <person name="Jentsch T.J."/>
            <person name="Pusch M."/>
        </authorList>
    </citation>
    <scope>REVIEW</scope>
</reference>
<reference key="13">
    <citation type="journal article" date="2021" name="Am. J. Hum. Genet.">
        <title>Unique variants in CLCN3, encoding an endosomal anion/proton exchanger, underlie a spectrum of neurodevelopmental disorders.</title>
        <authorList>
            <consortium name="CAUSES Study"/>
            <person name="Duncan A.R."/>
            <person name="Polovitskaya M.M."/>
            <person name="Gaitan-Penas H."/>
            <person name="Bertelli S."/>
            <person name="VanNoy G.E."/>
            <person name="Grant P.E."/>
            <person name="O'Donnell-Luria A."/>
            <person name="Valivullah Z."/>
            <person name="Lovgren A.K."/>
            <person name="England E.M."/>
            <person name="Agolini E."/>
            <person name="Madden J.A."/>
            <person name="Schmitz-Abe K."/>
            <person name="Kritzer A."/>
            <person name="Hawley P."/>
            <person name="Novelli A."/>
            <person name="Alfieri P."/>
            <person name="Colafati G.S."/>
            <person name="Wieczorek D."/>
            <person name="Platzer K."/>
            <person name="Luppe J."/>
            <person name="Koch-Hogrebe M."/>
            <person name="Abou Jamra R."/>
            <person name="Neira-Fresneda J."/>
            <person name="Lehman A."/>
            <person name="Boerkoel C.F."/>
            <person name="Seath K."/>
            <person name="Clarke L."/>
            <person name="van Ierland Y."/>
            <person name="Argilli E."/>
            <person name="Sherr E.H."/>
            <person name="Maiorana A."/>
            <person name="Diel T."/>
            <person name="Hempel M."/>
            <person name="Bierhals T."/>
            <person name="Estevez R."/>
            <person name="Jentsch T.J."/>
            <person name="Pusch M."/>
            <person name="Agrawal P.B."/>
        </authorList>
    </citation>
    <scope>INVOLVEMENT IN NEDHYBA</scope>
    <scope>INVOLVEMENT IN NEDSBA</scope>
    <scope>VARIANTS NEDHYBA CYS-85; THR-252; ALA-324; VAL-413; ARG-453; ILE-570; THR-607 AND ALA-772</scope>
</reference>
<comment type="function">
    <molecule>Isoform 1</molecule>
    <text evidence="3 15">Strongly outwardly rectifying, electrogenic H(+)/Cl(-)exchanger which mediates the exchange of chloride ions against protons (By similarity). The CLC channel family contains both chloride channels and proton-coupled anion transporters that exchange chloride or another anion for protons (PubMed:29845874). The presence of conserved gating glutamate residues is typical for family members that function as antiporters (PubMed:29845874).</text>
</comment>
<comment type="function">
    <molecule>Isoform 2</molecule>
    <text evidence="9">Strongly outwardly rectifying, electrogenic H(+)/Cl(-)exchanger which mediates the exchange of chloride ions against protons.</text>
</comment>
<comment type="subunit">
    <molecule>Isoform 1</molecule>
    <text evidence="3">Monomer and homodimer (By similarity). Forms heterodimers with CLCN4 (By similarity).</text>
</comment>
<comment type="subunit">
    <molecule>Isoform 2</molecule>
    <text evidence="9 10">Interacts with GOPC, PDZK1 and NHERF1/EBP50.</text>
</comment>
<comment type="interaction">
    <interactant intactId="EBI-25495642">
        <id>P51790-1</id>
    </interactant>
    <interactant intactId="EBI-25495635">
        <id>P51790-2</id>
        <label>CLCN3</label>
    </interactant>
    <organismsDiffer>false</organismsDiffer>
    <experiments>2</experiments>
</comment>
<comment type="interaction">
    <interactant intactId="EBI-25495635">
        <id>P51790-2</id>
    </interactant>
    <interactant intactId="EBI-349854">
        <id>P13569</id>
        <label>CFTR</label>
    </interactant>
    <organismsDiffer>false</organismsDiffer>
    <experiments>2</experiments>
</comment>
<comment type="interaction">
    <interactant intactId="EBI-25495635">
        <id>P51790-2</id>
    </interactant>
    <interactant intactId="EBI-349819">
        <id>Q5T2W1</id>
        <label>PDZK1</label>
    </interactant>
    <organismsDiffer>false</organismsDiffer>
    <experiments>2</experiments>
</comment>
<comment type="subcellular location">
    <molecule>Isoform 1</molecule>
    <subcellularLocation>
        <location evidence="10">Early endosome membrane</location>
        <topology evidence="5">Multi-pass membrane protein</topology>
    </subcellularLocation>
    <subcellularLocation>
        <location evidence="10">Late endosome membrane</location>
        <topology evidence="5">Multi-pass membrane protein</topology>
    </subcellularLocation>
    <subcellularLocation>
        <location evidence="3">Lysosome membrane</location>
        <topology evidence="5">Multi-pass membrane protein</topology>
    </subcellularLocation>
    <subcellularLocation>
        <location evidence="4">Cell membrane</location>
        <topology evidence="5">Multi-pass membrane protein</topology>
    </subcellularLocation>
    <text evidence="10">Isoform 1 is localized mainly in late endosomes.</text>
</comment>
<comment type="subcellular location">
    <molecule>Isoform 2</molecule>
    <subcellularLocation>
        <location evidence="10">Golgi apparatus membrane</location>
        <topology evidence="5">Multi-pass membrane protein</topology>
    </subcellularLocation>
    <subcellularLocation>
        <location evidence="9">Cell projection</location>
        <location evidence="9">Ruffle membrane</location>
        <topology evidence="9">Multi-pass membrane protein</topology>
    </subcellularLocation>
    <text evidence="9 10">Isoform 2 is mainly enriched in the Golgi (PubMed:12471024). Colocalizes with NHERF1/EBP50 in membrane ruffles (PubMed:11967229).</text>
</comment>
<comment type="alternative products">
    <event type="alternative splicing"/>
    <isoform>
        <id>P51790-1</id>
        <name>1</name>
        <name>ClC-3A</name>
        <sequence type="displayed"/>
    </isoform>
    <isoform>
        <id>P51790-2</id>
        <name>2</name>
        <name>ClC-3B</name>
        <sequence type="described" ref="VSP_016073"/>
    </isoform>
    <isoform>
        <id>P51790-4</id>
        <name>3</name>
        <sequence type="described" ref="VSP_045105"/>
    </isoform>
    <isoform>
        <id>P51790-5</id>
        <name>4</name>
        <sequence type="described" ref="VSP_054415"/>
    </isoform>
</comment>
<comment type="tissue specificity">
    <text evidence="7 9 10">Expressed primarily in tissues derived from neuroectoderm. Within the brain, its expression is particularly evident in the hippocampus, olfactory cortex, and olfactory bulb. Highly expressed in aortic and coronary vascular smooth muscle cells, and aortic endothelial cells. Also expressed in tracheal and alveolar epithelial cells, and intima and media of the pulmonary vessels. Expressed in bronchus and colon (at protein level).</text>
</comment>
<comment type="domain">
    <text evidence="9">Isoform 2 contains a C-terminal PDZ-binding motif mediating the interaction with GOPC.</text>
</comment>
<comment type="PTM">
    <text evidence="8 10">N-glycosylated.</text>
</comment>
<comment type="disease" evidence="11">
    <disease id="DI-06219">
        <name>Neurodevelopmental disorder with hypotonia and brain abnormalities</name>
        <acronym>NEDHYBA</acronym>
        <description>An autosomal dominant disorder characterized by onset in infancy or early childhood, global developmental delay, hypotonia, impaired intellectual development, and poor or absent speech. Additional variable manifestations may be present, including feeding difficulties, seizures, behavioral abnormalities, and non-specific dysmorphic facial features. Brain imaging shows variable abnormalities, including corpus callosum and cerebellar defects, and decreased white matter volume.</description>
        <dbReference type="MIM" id="619512"/>
    </disease>
    <text>The disease is caused by variants affecting the gene represented in this entry.</text>
</comment>
<comment type="disease" evidence="11">
    <disease id="DI-06220">
        <name>Neurodevelopmental disorder with seizures and brain abnormalities</name>
        <acronym>NEDSBA</acronym>
        <description>An autosomal recessive neurologic disorder characterized by global developmental delay and onset of seizures in the first months of life, and structural brain defects on brain imaging. Additional features may include pigmentary retinopathy with poor visual fixation and spasticity.</description>
        <dbReference type="MIM" id="619517"/>
    </disease>
    <text>The disease is caused by variants affecting the gene represented in this entry.</text>
</comment>
<comment type="similarity">
    <text evidence="16">Belongs to the chloride channel (TC 2.A.49) family. ClC-3/CLCN3 subfamily.</text>
</comment>
<comment type="sequence caution" evidence="16">
    <conflict type="erroneous initiation">
        <sequence resource="EMBL-CDS" id="BAC54560"/>
    </conflict>
    <text>Truncated N-terminus.</text>
</comment>
<comment type="sequence caution" evidence="16">
    <conflict type="erroneous initiation">
        <sequence resource="EMBL-CDS" id="CAA55281"/>
    </conflict>
    <text>Truncated N-terminus.</text>
</comment>
<protein>
    <recommendedName>
        <fullName>H(+)/Cl(-) exchange transporter 3</fullName>
    </recommendedName>
    <alternativeName>
        <fullName>Chloride channel protein 3</fullName>
        <shortName>ClC-3</shortName>
    </alternativeName>
    <alternativeName>
        <fullName>Chloride transporter ClC-3</fullName>
    </alternativeName>
</protein>
<name>CLCN3_HUMAN</name>
<feature type="chain" id="PRO_0000094438" description="H(+)/Cl(-) exchange transporter 3">
    <location>
        <begin position="1"/>
        <end position="818"/>
    </location>
</feature>
<feature type="topological domain" description="Cytoplasmic" evidence="2">
    <location>
        <begin position="1"/>
        <end position="125"/>
    </location>
</feature>
<feature type="transmembrane region" description="Helical" evidence="2">
    <location>
        <begin position="126"/>
        <end position="163"/>
    </location>
</feature>
<feature type="transmembrane region" description="Helical" evidence="2">
    <location>
        <begin position="209"/>
        <end position="232"/>
    </location>
</feature>
<feature type="intramembrane region" description="Helical" evidence="2">
    <location>
        <begin position="241"/>
        <end position="248"/>
    </location>
</feature>
<feature type="transmembrane region" description="Helical" evidence="2">
    <location>
        <begin position="258"/>
        <end position="276"/>
    </location>
</feature>
<feature type="transmembrane region" description="Helical" evidence="2">
    <location>
        <begin position="282"/>
        <end position="301"/>
    </location>
</feature>
<feature type="intramembrane region" description="Helical" evidence="2">
    <location>
        <begin position="313"/>
        <end position="325"/>
    </location>
</feature>
<feature type="intramembrane region" description="Helical" evidence="2">
    <location>
        <begin position="329"/>
        <end position="337"/>
    </location>
</feature>
<feature type="transmembrane region" description="Helical" evidence="2">
    <location>
        <begin position="349"/>
        <end position="367"/>
    </location>
</feature>
<feature type="transmembrane region" description="Helical" evidence="2">
    <location>
        <begin position="391"/>
        <end position="416"/>
    </location>
</feature>
<feature type="transmembrane region" description="Helical" evidence="2">
    <location>
        <begin position="423"/>
        <end position="443"/>
    </location>
</feature>
<feature type="transmembrane region" description="Helical" evidence="2">
    <location>
        <begin position="500"/>
        <end position="520"/>
    </location>
</feature>
<feature type="transmembrane region" description="Helical" evidence="2">
    <location>
        <begin position="525"/>
        <end position="544"/>
    </location>
</feature>
<feature type="intramembrane region" description="Helical" evidence="2">
    <location>
        <begin position="572"/>
        <end position="586"/>
    </location>
</feature>
<feature type="intramembrane region" description="Helical" evidence="2">
    <location>
        <begin position="590"/>
        <end position="601"/>
    </location>
</feature>
<feature type="intramembrane region" description="Note=Loop between two helices" evidence="2">
    <location>
        <begin position="602"/>
        <end position="605"/>
    </location>
</feature>
<feature type="transmembrane region" description="Helical" evidence="2">
    <location>
        <begin position="606"/>
        <end position="624"/>
    </location>
</feature>
<feature type="topological domain" description="Cytoplasmic" evidence="2">
    <location>
        <begin position="625"/>
        <end position="818"/>
    </location>
</feature>
<feature type="domain" description="CBS 1" evidence="6">
    <location>
        <begin position="658"/>
        <end position="722"/>
    </location>
</feature>
<feature type="domain" description="CBS 2" evidence="6">
    <location>
        <begin position="755"/>
        <end position="812"/>
    </location>
</feature>
<feature type="short sequence motif" description="Di-leucine internalization motif; mediates targeting to late endosome and lysosome membranes" evidence="3">
    <location>
        <begin position="28"/>
        <end position="29"/>
    </location>
</feature>
<feature type="short sequence motif" description="Di-leucine internalization motif; mediates targeting to late endosome and lysosome membranes" evidence="3">
    <location>
        <begin position="46"/>
        <end position="47"/>
    </location>
</feature>
<feature type="short sequence motif" description="Di-leucine internalization motif; mediates targeting to late endosome and lysosome membranes" evidence="3">
    <location>
        <begin position="71"/>
        <end position="75"/>
    </location>
</feature>
<feature type="short sequence motif" description="Selectivity filter part_1" evidence="1">
    <location>
        <begin position="238"/>
        <end position="242"/>
    </location>
</feature>
<feature type="short sequence motif" description="Selectivity filter part_2" evidence="1">
    <location>
        <begin position="280"/>
        <end position="284"/>
    </location>
</feature>
<feature type="short sequence motif" description="Selectivity filter part_3" evidence="1">
    <location>
        <begin position="525"/>
        <end position="529"/>
    </location>
</feature>
<feature type="binding site" evidence="1">
    <location>
        <position position="239"/>
    </location>
    <ligand>
        <name>chloride</name>
        <dbReference type="ChEBI" id="CHEBI:17996"/>
    </ligand>
</feature>
<feature type="binding site" evidence="1">
    <location>
        <position position="527"/>
    </location>
    <ligand>
        <name>chloride</name>
        <dbReference type="ChEBI" id="CHEBI:17996"/>
    </ligand>
</feature>
<feature type="binding site" evidence="1">
    <location>
        <position position="630"/>
    </location>
    <ligand>
        <name>chloride</name>
        <dbReference type="ChEBI" id="CHEBI:17996"/>
    </ligand>
</feature>
<feature type="binding site" evidence="1">
    <location>
        <begin position="689"/>
        <end position="691"/>
    </location>
    <ligand>
        <name>ATP</name>
        <dbReference type="ChEBI" id="CHEBI:30616"/>
    </ligand>
</feature>
<feature type="binding site" evidence="1">
    <location>
        <begin position="796"/>
        <end position="799"/>
    </location>
    <ligand>
        <name>ATP</name>
        <dbReference type="ChEBI" id="CHEBI:30616"/>
    </ligand>
</feature>
<feature type="site" description="Mediates proton transfer from the outer aqueous phase to the interior of the protein; involved in linking H(+) and Cl(-) transport" evidence="1">
    <location>
        <position position="282"/>
    </location>
</feature>
<feature type="site" description="Mediates proton transfer from the protein to the inner aqueous phase" evidence="1">
    <location>
        <position position="339"/>
    </location>
</feature>
<feature type="glycosylation site" description="N-linked (GlcNAc...) asparagine" evidence="5">
    <location>
        <position position="177"/>
    </location>
</feature>
<feature type="glycosylation site" description="N-linked (GlcNAc...) asparagine" evidence="5">
    <location>
        <position position="451"/>
    </location>
</feature>
<feature type="glycosylation site" description="N-linked (GlcNAc...) asparagine" evidence="5">
    <location>
        <position position="479"/>
    </location>
</feature>
<feature type="splice variant" id="VSP_054415" description="In isoform 4." evidence="14">
    <original>MESEQLFHRGYYRNSYNSITSASSDEELLDGAGVIMDFQTSEDDNLLDGDTAV</original>
    <variation>MVTLQLGESHYVVQAGLQLLGSSNPPALASQVAEIT</variation>
    <location>
        <begin position="1"/>
        <end position="53"/>
    </location>
</feature>
<feature type="splice variant" id="VSP_045105" description="In isoform 3." evidence="13">
    <location>
        <begin position="312"/>
        <end position="338"/>
    </location>
</feature>
<feature type="splice variant" id="VSP_016073" description="In isoform 2." evidence="12">
    <original>RLLGIITKKDILRHMAQTANQDPASIMFN</original>
    <variation>IVLGIITKKNILEHLEQLKQHVEPLAPPWHYNKKRYPPAYGPDGKPRPRFNNVQLNLTDEEREETEEEVYLLNSTTL</variation>
    <location>
        <begin position="790"/>
        <end position="818"/>
    </location>
</feature>
<feature type="sequence variant" id="VAR_086219" description="In NEDHYBA; dbSNP:rs2150238934." evidence="11">
    <original>Y</original>
    <variation>C</variation>
    <location>
        <position position="85"/>
    </location>
</feature>
<feature type="sequence variant" id="VAR_086220" description="In NEDHYBA; dbSNP:rs1732397227." evidence="11">
    <original>I</original>
    <variation>T</variation>
    <location>
        <position position="252"/>
    </location>
</feature>
<feature type="sequence variant" id="VAR_086221" description="In NEDHYBA; dbSNP:rs2150254146." evidence="11">
    <original>V</original>
    <variation>A</variation>
    <location>
        <position position="324"/>
    </location>
</feature>
<feature type="sequence variant" id="VAR_086222" description="In NEDHYBA; uncertain significance; dbSNP:rs1190062987." evidence="11">
    <original>A</original>
    <variation>V</variation>
    <location>
        <position position="413"/>
    </location>
</feature>
<feature type="sequence variant" id="VAR_086223" description="In NEDHYBA; dbSNP:rs201059509." evidence="11">
    <original>S</original>
    <variation>R</variation>
    <location>
        <position position="453"/>
    </location>
</feature>
<feature type="sequence variant" id="VAR_086224" description="In NEDHYBA; dbSNP:rs1732900321." evidence="11">
    <original>T</original>
    <variation>I</variation>
    <location>
        <position position="570"/>
    </location>
</feature>
<feature type="sequence variant" id="VAR_086225" description="In NEDHYBA; dbSNP:rs2150267036." evidence="11">
    <original>I</original>
    <variation>T</variation>
    <location>
        <position position="607"/>
    </location>
</feature>
<feature type="sequence variant" id="VAR_086226" description="In NEDHYBA; dbSNP:rs2150274994." evidence="11">
    <original>V</original>
    <variation>A</variation>
    <location>
        <position position="772"/>
    </location>
</feature>
<feature type="mutagenesis site" description="Changes channel selectivity from I(-)&gt;Cl(-) to Cl(-)&gt;I(-)." evidence="8">
    <original>G</original>
    <variation>E</variation>
    <location>
        <position position="280"/>
    </location>
</feature>
<feature type="sequence conflict" description="In Ref. 5; BX647119." evidence="16" ref="5">
    <original>M</original>
    <variation>T</variation>
    <location>
        <position position="209"/>
    </location>
</feature>
<feature type="sequence conflict" description="In Ref. 5; BX647119." evidence="16" ref="5">
    <original>Y</original>
    <variation>C</variation>
    <location>
        <position position="551"/>
    </location>
</feature>
<feature type="sequence conflict" description="In Ref. 5; BX647119." evidence="16" ref="5">
    <original>T</original>
    <variation>A</variation>
    <location>
        <position position="570"/>
    </location>
</feature>
<feature type="sequence conflict" description="In Ref. 1; CAA55280/CAA55281 and 4; BAC54560." evidence="16" ref="1 4">
    <original>E</original>
    <variation>EEF</variation>
    <location>
        <position position="646"/>
    </location>
</feature>
<feature type="sequence conflict" description="In Ref. 5; BX647119." evidence="16" ref="5">
    <original>Q</original>
    <variation>R</variation>
    <location>
        <position position="723"/>
    </location>
</feature>